<proteinExistence type="inferred from homology"/>
<keyword id="KW-0963">Cytoplasm</keyword>
<keyword id="KW-0489">Methyltransferase</keyword>
<keyword id="KW-0698">rRNA processing</keyword>
<keyword id="KW-0949">S-adenosyl-L-methionine</keyword>
<keyword id="KW-0808">Transferase</keyword>
<name>RSMH_LEGPC</name>
<sequence>MAKHQSVLLHESIKGLAIKADGIYFDGTFGRGGHSREILNHLSDKGRLFAIDKDLDAVQYAKDYFGLDKRFQIFHGSFAQIKEFASQAGVIGAVDGILLDLGVSSPQLDNPERGFSFMLQGPLDMRMDLTQSINAANFVNEAEVNELAHVFRAYGEERFAGRIAKAIVDARKLKPITTTLELAEIVKEANPKWEKHKHPATRVFQAIRIHVNQELTDLSNCLEQCLDVLGPRGRLAVISFHSLEDRIVKQFMRDKEQGNRPPVEVPIKYEELKTNFKRVGKAVKPQSSEIKENVRSRSAVLRIGEKLA</sequence>
<reference key="1">
    <citation type="submission" date="2006-11" db="EMBL/GenBank/DDBJ databases">
        <title>Identification and characterization of a new conjugation/ type IVA secretion system (trb/tra) of L. pneumophila Corby localized on a mobile genomic island.</title>
        <authorList>
            <person name="Gloeckner G."/>
            <person name="Albert-Weissenberger C."/>
            <person name="Weinmann E."/>
            <person name="Jacobi S."/>
            <person name="Schunder E."/>
            <person name="Steinert M."/>
            <person name="Buchrieser C."/>
            <person name="Hacker J."/>
            <person name="Heuner K."/>
        </authorList>
    </citation>
    <scope>NUCLEOTIDE SEQUENCE [LARGE SCALE GENOMIC DNA]</scope>
    <source>
        <strain>Corby</strain>
    </source>
</reference>
<organism>
    <name type="scientific">Legionella pneumophila (strain Corby)</name>
    <dbReference type="NCBI Taxonomy" id="400673"/>
    <lineage>
        <taxon>Bacteria</taxon>
        <taxon>Pseudomonadati</taxon>
        <taxon>Pseudomonadota</taxon>
        <taxon>Gammaproteobacteria</taxon>
        <taxon>Legionellales</taxon>
        <taxon>Legionellaceae</taxon>
        <taxon>Legionella</taxon>
    </lineage>
</organism>
<protein>
    <recommendedName>
        <fullName evidence="1">Ribosomal RNA small subunit methyltransferase H</fullName>
        <ecNumber evidence="1">2.1.1.199</ecNumber>
    </recommendedName>
    <alternativeName>
        <fullName evidence="1">16S rRNA m(4)C1402 methyltransferase</fullName>
    </alternativeName>
    <alternativeName>
        <fullName evidence="1">rRNA (cytosine-N(4)-)-methyltransferase RsmH</fullName>
    </alternativeName>
</protein>
<comment type="function">
    <text evidence="1">Specifically methylates the N4 position of cytidine in position 1402 (C1402) of 16S rRNA.</text>
</comment>
<comment type="catalytic activity">
    <reaction evidence="1">
        <text>cytidine(1402) in 16S rRNA + S-adenosyl-L-methionine = N(4)-methylcytidine(1402) in 16S rRNA + S-adenosyl-L-homocysteine + H(+)</text>
        <dbReference type="Rhea" id="RHEA:42928"/>
        <dbReference type="Rhea" id="RHEA-COMP:10286"/>
        <dbReference type="Rhea" id="RHEA-COMP:10287"/>
        <dbReference type="ChEBI" id="CHEBI:15378"/>
        <dbReference type="ChEBI" id="CHEBI:57856"/>
        <dbReference type="ChEBI" id="CHEBI:59789"/>
        <dbReference type="ChEBI" id="CHEBI:74506"/>
        <dbReference type="ChEBI" id="CHEBI:82748"/>
        <dbReference type="EC" id="2.1.1.199"/>
    </reaction>
</comment>
<comment type="subcellular location">
    <subcellularLocation>
        <location evidence="1">Cytoplasm</location>
    </subcellularLocation>
</comment>
<comment type="similarity">
    <text evidence="1">Belongs to the methyltransferase superfamily. RsmH family.</text>
</comment>
<evidence type="ECO:0000255" key="1">
    <source>
        <dbReference type="HAMAP-Rule" id="MF_01007"/>
    </source>
</evidence>
<accession>A5IFZ9</accession>
<gene>
    <name evidence="1" type="primary">rsmH</name>
    <name type="synonym">mraW</name>
    <name type="ordered locus">LPC_2377</name>
</gene>
<feature type="chain" id="PRO_0000386953" description="Ribosomal RNA small subunit methyltransferase H">
    <location>
        <begin position="1"/>
        <end position="308"/>
    </location>
</feature>
<feature type="binding site" evidence="1">
    <location>
        <begin position="32"/>
        <end position="34"/>
    </location>
    <ligand>
        <name>S-adenosyl-L-methionine</name>
        <dbReference type="ChEBI" id="CHEBI:59789"/>
    </ligand>
</feature>
<feature type="binding site" evidence="1">
    <location>
        <position position="52"/>
    </location>
    <ligand>
        <name>S-adenosyl-L-methionine</name>
        <dbReference type="ChEBI" id="CHEBI:59789"/>
    </ligand>
</feature>
<feature type="binding site" evidence="1">
    <location>
        <position position="78"/>
    </location>
    <ligand>
        <name>S-adenosyl-L-methionine</name>
        <dbReference type="ChEBI" id="CHEBI:59789"/>
    </ligand>
</feature>
<feature type="binding site" evidence="1">
    <location>
        <position position="100"/>
    </location>
    <ligand>
        <name>S-adenosyl-L-methionine</name>
        <dbReference type="ChEBI" id="CHEBI:59789"/>
    </ligand>
</feature>
<feature type="binding site" evidence="1">
    <location>
        <position position="107"/>
    </location>
    <ligand>
        <name>S-adenosyl-L-methionine</name>
        <dbReference type="ChEBI" id="CHEBI:59789"/>
    </ligand>
</feature>
<dbReference type="EC" id="2.1.1.199" evidence="1"/>
<dbReference type="EMBL" id="CP000675">
    <property type="protein sequence ID" value="ABQ56299.1"/>
    <property type="molecule type" value="Genomic_DNA"/>
</dbReference>
<dbReference type="RefSeq" id="WP_011946010.1">
    <property type="nucleotide sequence ID" value="NC_009494.2"/>
</dbReference>
<dbReference type="SMR" id="A5IFZ9"/>
<dbReference type="KEGG" id="lpc:LPC_2377"/>
<dbReference type="HOGENOM" id="CLU_038422_2_0_6"/>
<dbReference type="GO" id="GO:0005737">
    <property type="term" value="C:cytoplasm"/>
    <property type="evidence" value="ECO:0007669"/>
    <property type="project" value="UniProtKB-SubCell"/>
</dbReference>
<dbReference type="GO" id="GO:0071424">
    <property type="term" value="F:rRNA (cytosine-N4-)-methyltransferase activity"/>
    <property type="evidence" value="ECO:0007669"/>
    <property type="project" value="UniProtKB-UniRule"/>
</dbReference>
<dbReference type="GO" id="GO:0070475">
    <property type="term" value="P:rRNA base methylation"/>
    <property type="evidence" value="ECO:0007669"/>
    <property type="project" value="UniProtKB-UniRule"/>
</dbReference>
<dbReference type="FunFam" id="1.10.150.170:FF:000001">
    <property type="entry name" value="Ribosomal RNA small subunit methyltransferase H"/>
    <property type="match status" value="1"/>
</dbReference>
<dbReference type="Gene3D" id="1.10.150.170">
    <property type="entry name" value="Putative methyltransferase TM0872, insert domain"/>
    <property type="match status" value="1"/>
</dbReference>
<dbReference type="Gene3D" id="3.40.50.150">
    <property type="entry name" value="Vaccinia Virus protein VP39"/>
    <property type="match status" value="1"/>
</dbReference>
<dbReference type="HAMAP" id="MF_01007">
    <property type="entry name" value="16SrRNA_methyltr_H"/>
    <property type="match status" value="1"/>
</dbReference>
<dbReference type="InterPro" id="IPR002903">
    <property type="entry name" value="RsmH"/>
</dbReference>
<dbReference type="InterPro" id="IPR023397">
    <property type="entry name" value="SAM-dep_MeTrfase_MraW_recog"/>
</dbReference>
<dbReference type="InterPro" id="IPR029063">
    <property type="entry name" value="SAM-dependent_MTases_sf"/>
</dbReference>
<dbReference type="NCBIfam" id="TIGR00006">
    <property type="entry name" value="16S rRNA (cytosine(1402)-N(4))-methyltransferase RsmH"/>
    <property type="match status" value="1"/>
</dbReference>
<dbReference type="PANTHER" id="PTHR11265:SF0">
    <property type="entry name" value="12S RRNA N4-METHYLCYTIDINE METHYLTRANSFERASE"/>
    <property type="match status" value="1"/>
</dbReference>
<dbReference type="PANTHER" id="PTHR11265">
    <property type="entry name" value="S-ADENOSYL-METHYLTRANSFERASE MRAW"/>
    <property type="match status" value="1"/>
</dbReference>
<dbReference type="Pfam" id="PF01795">
    <property type="entry name" value="Methyltransf_5"/>
    <property type="match status" value="1"/>
</dbReference>
<dbReference type="PIRSF" id="PIRSF004486">
    <property type="entry name" value="MraW"/>
    <property type="match status" value="1"/>
</dbReference>
<dbReference type="SUPFAM" id="SSF81799">
    <property type="entry name" value="Putative methyltransferase TM0872, insert domain"/>
    <property type="match status" value="1"/>
</dbReference>
<dbReference type="SUPFAM" id="SSF53335">
    <property type="entry name" value="S-adenosyl-L-methionine-dependent methyltransferases"/>
    <property type="match status" value="1"/>
</dbReference>